<dbReference type="EC" id="5.1.3.14"/>
<dbReference type="EMBL" id="AE000512">
    <property type="protein sequence ID" value="AAD36111.1"/>
    <property type="molecule type" value="Genomic_DNA"/>
</dbReference>
<dbReference type="PIR" id="A72304">
    <property type="entry name" value="A72304"/>
</dbReference>
<dbReference type="RefSeq" id="NP_228840.1">
    <property type="nucleotide sequence ID" value="NC_000853.1"/>
</dbReference>
<dbReference type="RefSeq" id="WP_004080488.1">
    <property type="nucleotide sequence ID" value="NC_000853.1"/>
</dbReference>
<dbReference type="SMR" id="Q9X0C4"/>
<dbReference type="FunCoup" id="Q9X0C4">
    <property type="interactions" value="179"/>
</dbReference>
<dbReference type="STRING" id="243274.TM_1034"/>
<dbReference type="PaxDb" id="243274-THEMA_09190"/>
<dbReference type="EnsemblBacteria" id="AAD36111">
    <property type="protein sequence ID" value="AAD36111"/>
    <property type="gene ID" value="TM_1034"/>
</dbReference>
<dbReference type="KEGG" id="tma:TM1034"/>
<dbReference type="KEGG" id="tmi:THEMA_09190"/>
<dbReference type="KEGG" id="tmm:Tmari_1038"/>
<dbReference type="KEGG" id="tmw:THMA_1056"/>
<dbReference type="eggNOG" id="COG0381">
    <property type="taxonomic scope" value="Bacteria"/>
</dbReference>
<dbReference type="InParanoid" id="Q9X0C4"/>
<dbReference type="OrthoDB" id="9803238at2"/>
<dbReference type="Proteomes" id="UP000008183">
    <property type="component" value="Chromosome"/>
</dbReference>
<dbReference type="GO" id="GO:0005737">
    <property type="term" value="C:cytoplasm"/>
    <property type="evidence" value="ECO:0007669"/>
    <property type="project" value="UniProtKB-SubCell"/>
</dbReference>
<dbReference type="GO" id="GO:0008761">
    <property type="term" value="F:UDP-N-acetylglucosamine 2-epimerase activity"/>
    <property type="evidence" value="ECO:0007669"/>
    <property type="project" value="UniProtKB-EC"/>
</dbReference>
<dbReference type="GO" id="GO:0009103">
    <property type="term" value="P:lipopolysaccharide biosynthetic process"/>
    <property type="evidence" value="ECO:0007669"/>
    <property type="project" value="UniProtKB-KW"/>
</dbReference>
<dbReference type="CDD" id="cd03786">
    <property type="entry name" value="GTB_UDP-GlcNAc_2-Epimerase"/>
    <property type="match status" value="1"/>
</dbReference>
<dbReference type="FunFam" id="3.40.50.2000:FF:000043">
    <property type="entry name" value="UDP-N-acetylglucosamine 2-epimerase"/>
    <property type="match status" value="1"/>
</dbReference>
<dbReference type="Gene3D" id="3.40.50.2000">
    <property type="entry name" value="Glycogen Phosphorylase B"/>
    <property type="match status" value="2"/>
</dbReference>
<dbReference type="InterPro" id="IPR003331">
    <property type="entry name" value="UDP_GlcNAc_Epimerase_2_dom"/>
</dbReference>
<dbReference type="InterPro" id="IPR029767">
    <property type="entry name" value="WecB-like"/>
</dbReference>
<dbReference type="NCBIfam" id="TIGR00236">
    <property type="entry name" value="wecB"/>
    <property type="match status" value="1"/>
</dbReference>
<dbReference type="PANTHER" id="PTHR43174">
    <property type="entry name" value="UDP-N-ACETYLGLUCOSAMINE 2-EPIMERASE"/>
    <property type="match status" value="1"/>
</dbReference>
<dbReference type="PANTHER" id="PTHR43174:SF2">
    <property type="entry name" value="UDP-N-ACETYLGLUCOSAMINE 2-EPIMERASE"/>
    <property type="match status" value="1"/>
</dbReference>
<dbReference type="Pfam" id="PF02350">
    <property type="entry name" value="Epimerase_2"/>
    <property type="match status" value="1"/>
</dbReference>
<dbReference type="SUPFAM" id="SSF53756">
    <property type="entry name" value="UDP-Glycosyltransferase/glycogen phosphorylase"/>
    <property type="match status" value="1"/>
</dbReference>
<name>Y1034_THEMA</name>
<gene>
    <name type="ordered locus">TM_1034</name>
</gene>
<comment type="catalytic activity">
    <reaction>
        <text>UDP-N-acetyl-alpha-D-glucosamine = UDP-N-acetyl-alpha-D-mannosamine</text>
        <dbReference type="Rhea" id="RHEA:17213"/>
        <dbReference type="ChEBI" id="CHEBI:57705"/>
        <dbReference type="ChEBI" id="CHEBI:68623"/>
        <dbReference type="EC" id="5.1.3.14"/>
    </reaction>
</comment>
<comment type="subcellular location">
    <subcellularLocation>
        <location evidence="1">Cytoplasm</location>
    </subcellularLocation>
</comment>
<comment type="similarity">
    <text evidence="2">Belongs to the UDP-N-acetylglucosamine 2-epimerase family.</text>
</comment>
<protein>
    <recommendedName>
        <fullName>Putative UDP-N-acetylglucosamine 2-epimerase</fullName>
        <ecNumber>5.1.3.14</ecNumber>
    </recommendedName>
    <alternativeName>
        <fullName>UDP-GlcNAc-2-epimerase</fullName>
    </alternativeName>
</protein>
<accession>Q9X0C4</accession>
<feature type="chain" id="PRO_0000208534" description="Putative UDP-N-acetylglucosamine 2-epimerase">
    <location>
        <begin position="1"/>
        <end position="378"/>
    </location>
</feature>
<evidence type="ECO:0000250" key="1"/>
<evidence type="ECO:0000305" key="2"/>
<proteinExistence type="inferred from homology"/>
<reference key="1">
    <citation type="journal article" date="1999" name="Nature">
        <title>Evidence for lateral gene transfer between Archaea and Bacteria from genome sequence of Thermotoga maritima.</title>
        <authorList>
            <person name="Nelson K.E."/>
            <person name="Clayton R.A."/>
            <person name="Gill S.R."/>
            <person name="Gwinn M.L."/>
            <person name="Dodson R.J."/>
            <person name="Haft D.H."/>
            <person name="Hickey E.K."/>
            <person name="Peterson J.D."/>
            <person name="Nelson W.C."/>
            <person name="Ketchum K.A."/>
            <person name="McDonald L.A."/>
            <person name="Utterback T.R."/>
            <person name="Malek J.A."/>
            <person name="Linher K.D."/>
            <person name="Garrett M.M."/>
            <person name="Stewart A.M."/>
            <person name="Cotton M.D."/>
            <person name="Pratt M.S."/>
            <person name="Phillips C.A."/>
            <person name="Richardson D.L."/>
            <person name="Heidelberg J.F."/>
            <person name="Sutton G.G."/>
            <person name="Fleischmann R.D."/>
            <person name="Eisen J.A."/>
            <person name="White O."/>
            <person name="Salzberg S.L."/>
            <person name="Smith H.O."/>
            <person name="Venter J.C."/>
            <person name="Fraser C.M."/>
        </authorList>
    </citation>
    <scope>NUCLEOTIDE SEQUENCE [LARGE SCALE GENOMIC DNA]</scope>
    <source>
        <strain>ATCC 43589 / DSM 3109 / JCM 10099 / NBRC 100826 / MSB8</strain>
    </source>
</reference>
<sequence length="378" mass="42846">MIRVLSVFGTRPEAIKMAPLVKKLEEEQNVESLVCVTAQHRQMLDQVLEVFDIKPDFDLNIMKERQNLSDITVNALSGLYDLIGELKPDIVLVQGDTTTTFAGALAAFYHRIPVGHVEAGLRTNDRYSPFPEEINRRLTGVLSTLHFAPTKRNRENLLKENVMGKIYVTGNTVIDALRYTVKENHVFEDPILRNMDFSDGRYILLTSHRRENIGKPLENICRAVRRIVEGFEDVKVIYPVHMNPAVREIVFPMLENVERVFLIDPVNVIDMHNLMARSYLIMTDSGGIQEEAPALGKPVIVLRKETERPEAIEAGVAVLGGVEEERIFELAKKLLVDREEYEKMAKAVNPFGDGRASERIVKAILHEFGLSDPPEEFC</sequence>
<organism>
    <name type="scientific">Thermotoga maritima (strain ATCC 43589 / DSM 3109 / JCM 10099 / NBRC 100826 / MSB8)</name>
    <dbReference type="NCBI Taxonomy" id="243274"/>
    <lineage>
        <taxon>Bacteria</taxon>
        <taxon>Thermotogati</taxon>
        <taxon>Thermotogota</taxon>
        <taxon>Thermotogae</taxon>
        <taxon>Thermotogales</taxon>
        <taxon>Thermotogaceae</taxon>
        <taxon>Thermotoga</taxon>
    </lineage>
</organism>
<keyword id="KW-0963">Cytoplasm</keyword>
<keyword id="KW-0413">Isomerase</keyword>
<keyword id="KW-0448">Lipopolysaccharide biosynthesis</keyword>
<keyword id="KW-1185">Reference proteome</keyword>